<evidence type="ECO:0000255" key="1">
    <source>
        <dbReference type="HAMAP-Rule" id="MF_01454"/>
    </source>
</evidence>
<evidence type="ECO:0000255" key="2">
    <source>
        <dbReference type="PROSITE-ProRule" id="PRU01231"/>
    </source>
</evidence>
<evidence type="ECO:0000256" key="3">
    <source>
        <dbReference type="SAM" id="MobiDB-lite"/>
    </source>
</evidence>
<keyword id="KW-0963">Cytoplasm</keyword>
<keyword id="KW-0342">GTP-binding</keyword>
<keyword id="KW-0378">Hydrolase</keyword>
<keyword id="KW-0460">Magnesium</keyword>
<keyword id="KW-0479">Metal-binding</keyword>
<keyword id="KW-0547">Nucleotide-binding</keyword>
<keyword id="KW-1185">Reference proteome</keyword>
<feature type="chain" id="PRO_0000386126" description="GTPase Obg">
    <location>
        <begin position="1"/>
        <end position="361"/>
    </location>
</feature>
<feature type="domain" description="Obg" evidence="2">
    <location>
        <begin position="1"/>
        <end position="159"/>
    </location>
</feature>
<feature type="domain" description="OBG-type G" evidence="1">
    <location>
        <begin position="160"/>
        <end position="334"/>
    </location>
</feature>
<feature type="region of interest" description="Disordered" evidence="3">
    <location>
        <begin position="339"/>
        <end position="361"/>
    </location>
</feature>
<feature type="compositionally biased region" description="Pro residues" evidence="3">
    <location>
        <begin position="351"/>
        <end position="361"/>
    </location>
</feature>
<feature type="binding site" evidence="1">
    <location>
        <begin position="166"/>
        <end position="173"/>
    </location>
    <ligand>
        <name>GTP</name>
        <dbReference type="ChEBI" id="CHEBI:37565"/>
    </ligand>
</feature>
<feature type="binding site" evidence="1">
    <location>
        <position position="173"/>
    </location>
    <ligand>
        <name>Mg(2+)</name>
        <dbReference type="ChEBI" id="CHEBI:18420"/>
    </ligand>
</feature>
<feature type="binding site" evidence="1">
    <location>
        <begin position="191"/>
        <end position="195"/>
    </location>
    <ligand>
        <name>GTP</name>
        <dbReference type="ChEBI" id="CHEBI:37565"/>
    </ligand>
</feature>
<feature type="binding site" evidence="1">
    <location>
        <position position="193"/>
    </location>
    <ligand>
        <name>Mg(2+)</name>
        <dbReference type="ChEBI" id="CHEBI:18420"/>
    </ligand>
</feature>
<feature type="binding site" evidence="1">
    <location>
        <begin position="213"/>
        <end position="216"/>
    </location>
    <ligand>
        <name>GTP</name>
        <dbReference type="ChEBI" id="CHEBI:37565"/>
    </ligand>
</feature>
<feature type="binding site" evidence="1">
    <location>
        <begin position="284"/>
        <end position="287"/>
    </location>
    <ligand>
        <name>GTP</name>
        <dbReference type="ChEBI" id="CHEBI:37565"/>
    </ligand>
</feature>
<feature type="binding site" evidence="1">
    <location>
        <begin position="315"/>
        <end position="317"/>
    </location>
    <ligand>
        <name>GTP</name>
        <dbReference type="ChEBI" id="CHEBI:37565"/>
    </ligand>
</feature>
<organism>
    <name type="scientific">Polaromonas sp. (strain JS666 / ATCC BAA-500)</name>
    <dbReference type="NCBI Taxonomy" id="296591"/>
    <lineage>
        <taxon>Bacteria</taxon>
        <taxon>Pseudomonadati</taxon>
        <taxon>Pseudomonadota</taxon>
        <taxon>Betaproteobacteria</taxon>
        <taxon>Burkholderiales</taxon>
        <taxon>Comamonadaceae</taxon>
        <taxon>Polaromonas</taxon>
    </lineage>
</organism>
<sequence length="361" mass="39418">MKFVDEAFIDIAAGDGGSGCVSFSHEKYKEFGGPNGGDGGRGGHVYAVADVNLNTLVDFRFSRRHEARNGQHGMGSDMFGAKGDDIILKMPVGTILTDAETGEVLFELLVPGEQVLIAKGGDGGFGNLRFKSSTNRAPRSKTPGWPGERKNLKLELKVLADVGLLGMPNAGKSTFISAVSNARPRIADYPFTTLHPNLGVVRVGPEQSFVVADLPGLIEGASEGAGLGHLFLRHLQRTRLLLHIVDLAPFDEGVDPVAQAKAIVRELKKYDEALYEKPRWLVLNKLDMVDADKRAAIVKDFVKRFKFKGPVFEISALTREGCEHLIKTIYQHVKQVQKSEQPVEEVDPRFVPLPPESPETP</sequence>
<gene>
    <name evidence="1" type="primary">obg</name>
    <name type="ordered locus">Bpro_0837</name>
</gene>
<protein>
    <recommendedName>
        <fullName evidence="1">GTPase Obg</fullName>
        <ecNumber evidence="1">3.6.5.-</ecNumber>
    </recommendedName>
    <alternativeName>
        <fullName evidence="1">GTP-binding protein Obg</fullName>
    </alternativeName>
</protein>
<accession>Q12F99</accession>
<proteinExistence type="inferred from homology"/>
<comment type="function">
    <text evidence="1">An essential GTPase which binds GTP, GDP and possibly (p)ppGpp with moderate affinity, with high nucleotide exchange rates and a fairly low GTP hydrolysis rate. Plays a role in control of the cell cycle, stress response, ribosome biogenesis and in those bacteria that undergo differentiation, in morphogenesis control.</text>
</comment>
<comment type="cofactor">
    <cofactor evidence="1">
        <name>Mg(2+)</name>
        <dbReference type="ChEBI" id="CHEBI:18420"/>
    </cofactor>
</comment>
<comment type="subunit">
    <text evidence="1">Monomer.</text>
</comment>
<comment type="subcellular location">
    <subcellularLocation>
        <location evidence="1">Cytoplasm</location>
    </subcellularLocation>
</comment>
<comment type="similarity">
    <text evidence="1">Belongs to the TRAFAC class OBG-HflX-like GTPase superfamily. OBG GTPase family.</text>
</comment>
<reference key="1">
    <citation type="journal article" date="2008" name="Appl. Environ. Microbiol.">
        <title>The genome of Polaromonas sp. strain JS666: insights into the evolution of a hydrocarbon- and xenobiotic-degrading bacterium, and features of relevance to biotechnology.</title>
        <authorList>
            <person name="Mattes T.E."/>
            <person name="Alexander A.K."/>
            <person name="Richardson P.M."/>
            <person name="Munk A.C."/>
            <person name="Han C.S."/>
            <person name="Stothard P."/>
            <person name="Coleman N.V."/>
        </authorList>
    </citation>
    <scope>NUCLEOTIDE SEQUENCE [LARGE SCALE GENOMIC DNA]</scope>
    <source>
        <strain>JS666 / ATCC BAA-500</strain>
    </source>
</reference>
<name>OBG_POLSJ</name>
<dbReference type="EC" id="3.6.5.-" evidence="1"/>
<dbReference type="EMBL" id="CP000316">
    <property type="protein sequence ID" value="ABE42793.1"/>
    <property type="molecule type" value="Genomic_DNA"/>
</dbReference>
<dbReference type="RefSeq" id="WP_011481795.1">
    <property type="nucleotide sequence ID" value="NC_007948.1"/>
</dbReference>
<dbReference type="SMR" id="Q12F99"/>
<dbReference type="STRING" id="296591.Bpro_0837"/>
<dbReference type="KEGG" id="pol:Bpro_0837"/>
<dbReference type="eggNOG" id="COG0536">
    <property type="taxonomic scope" value="Bacteria"/>
</dbReference>
<dbReference type="HOGENOM" id="CLU_011747_2_0_4"/>
<dbReference type="OrthoDB" id="9807318at2"/>
<dbReference type="Proteomes" id="UP000001983">
    <property type="component" value="Chromosome"/>
</dbReference>
<dbReference type="GO" id="GO:0005737">
    <property type="term" value="C:cytoplasm"/>
    <property type="evidence" value="ECO:0007669"/>
    <property type="project" value="UniProtKB-SubCell"/>
</dbReference>
<dbReference type="GO" id="GO:0005525">
    <property type="term" value="F:GTP binding"/>
    <property type="evidence" value="ECO:0007669"/>
    <property type="project" value="UniProtKB-UniRule"/>
</dbReference>
<dbReference type="GO" id="GO:0003924">
    <property type="term" value="F:GTPase activity"/>
    <property type="evidence" value="ECO:0007669"/>
    <property type="project" value="UniProtKB-UniRule"/>
</dbReference>
<dbReference type="GO" id="GO:0000287">
    <property type="term" value="F:magnesium ion binding"/>
    <property type="evidence" value="ECO:0007669"/>
    <property type="project" value="InterPro"/>
</dbReference>
<dbReference type="GO" id="GO:0042254">
    <property type="term" value="P:ribosome biogenesis"/>
    <property type="evidence" value="ECO:0007669"/>
    <property type="project" value="UniProtKB-UniRule"/>
</dbReference>
<dbReference type="CDD" id="cd01898">
    <property type="entry name" value="Obg"/>
    <property type="match status" value="1"/>
</dbReference>
<dbReference type="FunFam" id="2.70.210.12:FF:000001">
    <property type="entry name" value="GTPase Obg"/>
    <property type="match status" value="1"/>
</dbReference>
<dbReference type="Gene3D" id="2.70.210.12">
    <property type="entry name" value="GTP1/OBG domain"/>
    <property type="match status" value="1"/>
</dbReference>
<dbReference type="Gene3D" id="3.40.50.300">
    <property type="entry name" value="P-loop containing nucleotide triphosphate hydrolases"/>
    <property type="match status" value="1"/>
</dbReference>
<dbReference type="HAMAP" id="MF_01454">
    <property type="entry name" value="GTPase_Obg"/>
    <property type="match status" value="1"/>
</dbReference>
<dbReference type="InterPro" id="IPR031167">
    <property type="entry name" value="G_OBG"/>
</dbReference>
<dbReference type="InterPro" id="IPR006073">
    <property type="entry name" value="GTP-bd"/>
</dbReference>
<dbReference type="InterPro" id="IPR014100">
    <property type="entry name" value="GTP-bd_Obg/CgtA"/>
</dbReference>
<dbReference type="InterPro" id="IPR006074">
    <property type="entry name" value="GTP1-OBG_CS"/>
</dbReference>
<dbReference type="InterPro" id="IPR006169">
    <property type="entry name" value="GTP1_OBG_dom"/>
</dbReference>
<dbReference type="InterPro" id="IPR036726">
    <property type="entry name" value="GTP1_OBG_dom_sf"/>
</dbReference>
<dbReference type="InterPro" id="IPR045086">
    <property type="entry name" value="OBG_GTPase"/>
</dbReference>
<dbReference type="InterPro" id="IPR027417">
    <property type="entry name" value="P-loop_NTPase"/>
</dbReference>
<dbReference type="InterPro" id="IPR005225">
    <property type="entry name" value="Small_GTP-bd"/>
</dbReference>
<dbReference type="NCBIfam" id="TIGR02729">
    <property type="entry name" value="Obg_CgtA"/>
    <property type="match status" value="1"/>
</dbReference>
<dbReference type="NCBIfam" id="NF008954">
    <property type="entry name" value="PRK12296.1"/>
    <property type="match status" value="1"/>
</dbReference>
<dbReference type="NCBIfam" id="NF008955">
    <property type="entry name" value="PRK12297.1"/>
    <property type="match status" value="1"/>
</dbReference>
<dbReference type="NCBIfam" id="NF008956">
    <property type="entry name" value="PRK12299.1"/>
    <property type="match status" value="1"/>
</dbReference>
<dbReference type="NCBIfam" id="TIGR00231">
    <property type="entry name" value="small_GTP"/>
    <property type="match status" value="1"/>
</dbReference>
<dbReference type="PANTHER" id="PTHR11702">
    <property type="entry name" value="DEVELOPMENTALLY REGULATED GTP-BINDING PROTEIN-RELATED"/>
    <property type="match status" value="1"/>
</dbReference>
<dbReference type="PANTHER" id="PTHR11702:SF31">
    <property type="entry name" value="MITOCHONDRIAL RIBOSOME-ASSOCIATED GTPASE 2"/>
    <property type="match status" value="1"/>
</dbReference>
<dbReference type="Pfam" id="PF01018">
    <property type="entry name" value="GTP1_OBG"/>
    <property type="match status" value="1"/>
</dbReference>
<dbReference type="Pfam" id="PF01926">
    <property type="entry name" value="MMR_HSR1"/>
    <property type="match status" value="1"/>
</dbReference>
<dbReference type="PIRSF" id="PIRSF002401">
    <property type="entry name" value="GTP_bd_Obg/CgtA"/>
    <property type="match status" value="1"/>
</dbReference>
<dbReference type="PRINTS" id="PR00326">
    <property type="entry name" value="GTP1OBG"/>
</dbReference>
<dbReference type="SUPFAM" id="SSF82051">
    <property type="entry name" value="Obg GTP-binding protein N-terminal domain"/>
    <property type="match status" value="1"/>
</dbReference>
<dbReference type="SUPFAM" id="SSF52540">
    <property type="entry name" value="P-loop containing nucleoside triphosphate hydrolases"/>
    <property type="match status" value="1"/>
</dbReference>
<dbReference type="PROSITE" id="PS51710">
    <property type="entry name" value="G_OBG"/>
    <property type="match status" value="1"/>
</dbReference>
<dbReference type="PROSITE" id="PS00905">
    <property type="entry name" value="GTP1_OBG"/>
    <property type="match status" value="1"/>
</dbReference>
<dbReference type="PROSITE" id="PS51883">
    <property type="entry name" value="OBG"/>
    <property type="match status" value="1"/>
</dbReference>